<evidence type="ECO:0000255" key="1">
    <source>
        <dbReference type="HAMAP-Rule" id="MF_01522"/>
    </source>
</evidence>
<sequence length="676" mass="74761">MEVENKLNRMTAAGLLIAIGIVYGDIGTSPLYVMKSVIAGNGGINTVGRDLIIGTISLILWTVTLLTTVQTVIIALRATNHGEGGIFALYALIRKKAAWLVWPALIGGAAILADGTLTPAVTVTSAIEGLKGLEFGKGNVPVSNQTTVLVITIVILLVLFSIQRMGTRIIGKAFGPIMLVWFAFLGVMGLINIGGNWWILQALNPYYAIKLLFSPYNKAGFAILGSIFLATTGAEALYSDVGHVGKGNIIGSWPFVFVCLSLNYFGQGVWILNNTNMHSATEINPFYAMIPENIRLASIVLATLAAIIASQALITGSFTLVAESINLKFLPRMNILYPSDERGQIYIPAVNKMLGITTIALVLFFRTSAHMEAAYGLSITISMLTTTILLYEWLVLKQGHNLANLLFVIFFSTINILFMGSSLSKFTHGGYVSLLITLLIASVMVVWYFGNKVRDQNVAGNAYVRLDEYTDMLTNLSHDDNYPTYSDNLVYMANVKYNKFIKREILYSILDKRPKRARAYWFVTVNVTNEPFTAEYAVNTFGTKNVINIQLYLGFKKQTSVNVYLRQIVHDLIKDNTIEAQPQEYTTTPGRDVGDFKFVIVNDVISPSTTLSSYKKWLVKARVQLQNLSLNPAQWFGLEFADMVIERVPLILGKQEPERIKRVAPVDYSKASLNKK</sequence>
<proteinExistence type="inferred from homology"/>
<gene>
    <name evidence="1" type="primary">kup</name>
    <name type="ordered locus">LBUL_0192</name>
</gene>
<dbReference type="EMBL" id="CP000412">
    <property type="protein sequence ID" value="ABJ57869.1"/>
    <property type="molecule type" value="Genomic_DNA"/>
</dbReference>
<dbReference type="RefSeq" id="WP_011677959.1">
    <property type="nucleotide sequence ID" value="NC_008529.1"/>
</dbReference>
<dbReference type="KEGG" id="lbu:LBUL_0192"/>
<dbReference type="HOGENOM" id="CLU_008142_4_1_9"/>
<dbReference type="BioCyc" id="LDEL321956:LBUL_RS00895-MONOMER"/>
<dbReference type="GO" id="GO:0005886">
    <property type="term" value="C:plasma membrane"/>
    <property type="evidence" value="ECO:0007669"/>
    <property type="project" value="UniProtKB-SubCell"/>
</dbReference>
<dbReference type="GO" id="GO:0015079">
    <property type="term" value="F:potassium ion transmembrane transporter activity"/>
    <property type="evidence" value="ECO:0007669"/>
    <property type="project" value="UniProtKB-UniRule"/>
</dbReference>
<dbReference type="GO" id="GO:0015293">
    <property type="term" value="F:symporter activity"/>
    <property type="evidence" value="ECO:0007669"/>
    <property type="project" value="UniProtKB-UniRule"/>
</dbReference>
<dbReference type="HAMAP" id="MF_01522">
    <property type="entry name" value="Kup"/>
    <property type="match status" value="1"/>
</dbReference>
<dbReference type="InterPro" id="IPR003855">
    <property type="entry name" value="K+_transporter"/>
</dbReference>
<dbReference type="InterPro" id="IPR053952">
    <property type="entry name" value="K_trans_C"/>
</dbReference>
<dbReference type="InterPro" id="IPR053951">
    <property type="entry name" value="K_trans_N"/>
</dbReference>
<dbReference type="InterPro" id="IPR023051">
    <property type="entry name" value="Kup"/>
</dbReference>
<dbReference type="PANTHER" id="PTHR30540">
    <property type="entry name" value="OSMOTIC STRESS POTASSIUM TRANSPORTER"/>
    <property type="match status" value="1"/>
</dbReference>
<dbReference type="PANTHER" id="PTHR30540:SF99">
    <property type="entry name" value="POTASSIUM TRANSPORTER"/>
    <property type="match status" value="1"/>
</dbReference>
<dbReference type="Pfam" id="PF02705">
    <property type="entry name" value="K_trans"/>
    <property type="match status" value="1"/>
</dbReference>
<dbReference type="Pfam" id="PF22776">
    <property type="entry name" value="K_trans_C"/>
    <property type="match status" value="1"/>
</dbReference>
<name>KUP_LACDB</name>
<feature type="chain" id="PRO_0000279792" description="Probable potassium transport system protein Kup">
    <location>
        <begin position="1"/>
        <end position="676"/>
    </location>
</feature>
<feature type="transmembrane region" description="Helical" evidence="1">
    <location>
        <begin position="14"/>
        <end position="34"/>
    </location>
</feature>
<feature type="transmembrane region" description="Helical" evidence="1">
    <location>
        <begin position="56"/>
        <end position="76"/>
    </location>
</feature>
<feature type="transmembrane region" description="Helical" evidence="1">
    <location>
        <begin position="97"/>
        <end position="117"/>
    </location>
</feature>
<feature type="transmembrane region" description="Helical" evidence="1">
    <location>
        <begin position="142"/>
        <end position="162"/>
    </location>
</feature>
<feature type="transmembrane region" description="Helical" evidence="1">
    <location>
        <begin position="173"/>
        <end position="193"/>
    </location>
</feature>
<feature type="transmembrane region" description="Helical" evidence="1">
    <location>
        <begin position="219"/>
        <end position="239"/>
    </location>
</feature>
<feature type="transmembrane region" description="Helical" evidence="1">
    <location>
        <begin position="252"/>
        <end position="272"/>
    </location>
</feature>
<feature type="transmembrane region" description="Helical" evidence="1">
    <location>
        <begin position="296"/>
        <end position="316"/>
    </location>
</feature>
<feature type="transmembrane region" description="Helical" evidence="1">
    <location>
        <begin position="345"/>
        <end position="365"/>
    </location>
</feature>
<feature type="transmembrane region" description="Helical" evidence="1">
    <location>
        <begin position="376"/>
        <end position="396"/>
    </location>
</feature>
<feature type="transmembrane region" description="Helical" evidence="1">
    <location>
        <begin position="402"/>
        <end position="422"/>
    </location>
</feature>
<feature type="transmembrane region" description="Helical" evidence="1">
    <location>
        <begin position="429"/>
        <end position="449"/>
    </location>
</feature>
<organism>
    <name type="scientific">Lactobacillus delbrueckii subsp. bulgaricus (strain ATCC BAA-365 / Lb-18)</name>
    <dbReference type="NCBI Taxonomy" id="321956"/>
    <lineage>
        <taxon>Bacteria</taxon>
        <taxon>Bacillati</taxon>
        <taxon>Bacillota</taxon>
        <taxon>Bacilli</taxon>
        <taxon>Lactobacillales</taxon>
        <taxon>Lactobacillaceae</taxon>
        <taxon>Lactobacillus</taxon>
    </lineage>
</organism>
<keyword id="KW-1003">Cell membrane</keyword>
<keyword id="KW-0406">Ion transport</keyword>
<keyword id="KW-0472">Membrane</keyword>
<keyword id="KW-0630">Potassium</keyword>
<keyword id="KW-0633">Potassium transport</keyword>
<keyword id="KW-0769">Symport</keyword>
<keyword id="KW-0812">Transmembrane</keyword>
<keyword id="KW-1133">Transmembrane helix</keyword>
<keyword id="KW-0813">Transport</keyword>
<protein>
    <recommendedName>
        <fullName evidence="1">Probable potassium transport system protein Kup</fullName>
    </recommendedName>
</protein>
<reference key="1">
    <citation type="journal article" date="2006" name="Proc. Natl. Acad. Sci. U.S.A.">
        <title>Comparative genomics of the lactic acid bacteria.</title>
        <authorList>
            <person name="Makarova K.S."/>
            <person name="Slesarev A."/>
            <person name="Wolf Y.I."/>
            <person name="Sorokin A."/>
            <person name="Mirkin B."/>
            <person name="Koonin E.V."/>
            <person name="Pavlov A."/>
            <person name="Pavlova N."/>
            <person name="Karamychev V."/>
            <person name="Polouchine N."/>
            <person name="Shakhova V."/>
            <person name="Grigoriev I."/>
            <person name="Lou Y."/>
            <person name="Rohksar D."/>
            <person name="Lucas S."/>
            <person name="Huang K."/>
            <person name="Goodstein D.M."/>
            <person name="Hawkins T."/>
            <person name="Plengvidhya V."/>
            <person name="Welker D."/>
            <person name="Hughes J."/>
            <person name="Goh Y."/>
            <person name="Benson A."/>
            <person name="Baldwin K."/>
            <person name="Lee J.-H."/>
            <person name="Diaz-Muniz I."/>
            <person name="Dosti B."/>
            <person name="Smeianov V."/>
            <person name="Wechter W."/>
            <person name="Barabote R."/>
            <person name="Lorca G."/>
            <person name="Altermann E."/>
            <person name="Barrangou R."/>
            <person name="Ganesan B."/>
            <person name="Xie Y."/>
            <person name="Rawsthorne H."/>
            <person name="Tamir D."/>
            <person name="Parker C."/>
            <person name="Breidt F."/>
            <person name="Broadbent J.R."/>
            <person name="Hutkins R."/>
            <person name="O'Sullivan D."/>
            <person name="Steele J."/>
            <person name="Unlu G."/>
            <person name="Saier M.H. Jr."/>
            <person name="Klaenhammer T."/>
            <person name="Richardson P."/>
            <person name="Kozyavkin S."/>
            <person name="Weimer B.C."/>
            <person name="Mills D.A."/>
        </authorList>
    </citation>
    <scope>NUCLEOTIDE SEQUENCE [LARGE SCALE GENOMIC DNA]</scope>
    <source>
        <strain>ATCC BAA-365 / Lb-18</strain>
    </source>
</reference>
<comment type="function">
    <text evidence="1">Transport of potassium into the cell. Likely operates as a K(+):H(+) symporter.</text>
</comment>
<comment type="catalytic activity">
    <reaction evidence="1">
        <text>K(+)(in) + H(+)(in) = K(+)(out) + H(+)(out)</text>
        <dbReference type="Rhea" id="RHEA:28490"/>
        <dbReference type="ChEBI" id="CHEBI:15378"/>
        <dbReference type="ChEBI" id="CHEBI:29103"/>
    </reaction>
    <physiologicalReaction direction="right-to-left" evidence="1">
        <dbReference type="Rhea" id="RHEA:28492"/>
    </physiologicalReaction>
</comment>
<comment type="subcellular location">
    <subcellularLocation>
        <location evidence="1">Cell membrane</location>
        <topology evidence="1">Multi-pass membrane protein</topology>
    </subcellularLocation>
</comment>
<comment type="similarity">
    <text evidence="1">Belongs to the HAK/KUP transporter (TC 2.A.72) family.</text>
</comment>
<accession>Q04CF3</accession>